<proteinExistence type="inferred from homology"/>
<reference key="1">
    <citation type="journal article" date="2001" name="Nature">
        <title>Complete genome sequence of Salmonella enterica serovar Typhimurium LT2.</title>
        <authorList>
            <person name="McClelland M."/>
            <person name="Sanderson K.E."/>
            <person name="Spieth J."/>
            <person name="Clifton S.W."/>
            <person name="Latreille P."/>
            <person name="Courtney L."/>
            <person name="Porwollik S."/>
            <person name="Ali J."/>
            <person name="Dante M."/>
            <person name="Du F."/>
            <person name="Hou S."/>
            <person name="Layman D."/>
            <person name="Leonard S."/>
            <person name="Nguyen C."/>
            <person name="Scott K."/>
            <person name="Holmes A."/>
            <person name="Grewal N."/>
            <person name="Mulvaney E."/>
            <person name="Ryan E."/>
            <person name="Sun H."/>
            <person name="Florea L."/>
            <person name="Miller W."/>
            <person name="Stoneking T."/>
            <person name="Nhan M."/>
            <person name="Waterston R."/>
            <person name="Wilson R.K."/>
        </authorList>
    </citation>
    <scope>NUCLEOTIDE SEQUENCE [LARGE SCALE GENOMIC DNA]</scope>
    <source>
        <strain>LT2 / SGSC1412 / ATCC 700720</strain>
    </source>
</reference>
<dbReference type="EC" id="3.6.1.-" evidence="1"/>
<dbReference type="EMBL" id="AE006468">
    <property type="protein sequence ID" value="AAL22737.1"/>
    <property type="molecule type" value="Genomic_DNA"/>
</dbReference>
<dbReference type="RefSeq" id="WP_000940991.1">
    <property type="nucleotide sequence ID" value="NC_003197.2"/>
</dbReference>
<dbReference type="SMR" id="Q8ZKW2"/>
<dbReference type="STRING" id="99287.STM3879"/>
<dbReference type="PaxDb" id="99287-STM3879"/>
<dbReference type="KEGG" id="stm:STM3879"/>
<dbReference type="PATRIC" id="fig|99287.12.peg.4109"/>
<dbReference type="HOGENOM" id="CLU_018678_1_0_6"/>
<dbReference type="PhylomeDB" id="Q8ZKW2"/>
<dbReference type="BioCyc" id="SENT99287:STM3879-MONOMER"/>
<dbReference type="Proteomes" id="UP000001014">
    <property type="component" value="Chromosome"/>
</dbReference>
<dbReference type="GO" id="GO:0005829">
    <property type="term" value="C:cytosol"/>
    <property type="evidence" value="ECO:0000318"/>
    <property type="project" value="GO_Central"/>
</dbReference>
<dbReference type="GO" id="GO:0005524">
    <property type="term" value="F:ATP binding"/>
    <property type="evidence" value="ECO:0007669"/>
    <property type="project" value="UniProtKB-KW"/>
</dbReference>
<dbReference type="GO" id="GO:0016887">
    <property type="term" value="F:ATP hydrolysis activity"/>
    <property type="evidence" value="ECO:0000318"/>
    <property type="project" value="GO_Central"/>
</dbReference>
<dbReference type="CDD" id="cd00009">
    <property type="entry name" value="AAA"/>
    <property type="match status" value="1"/>
</dbReference>
<dbReference type="FunFam" id="3.40.50.300:FF:000410">
    <property type="entry name" value="ATPase RavA"/>
    <property type="match status" value="1"/>
</dbReference>
<dbReference type="Gene3D" id="1.20.58.1510">
    <property type="match status" value="1"/>
</dbReference>
<dbReference type="Gene3D" id="2.40.128.430">
    <property type="match status" value="1"/>
</dbReference>
<dbReference type="Gene3D" id="3.40.50.300">
    <property type="entry name" value="P-loop containing nucleotide triphosphate hydrolases"/>
    <property type="match status" value="1"/>
</dbReference>
<dbReference type="HAMAP" id="MF_01625">
    <property type="entry name" value="ATPase_RavA"/>
    <property type="match status" value="1"/>
</dbReference>
<dbReference type="InterPro" id="IPR003593">
    <property type="entry name" value="AAA+_ATPase"/>
</dbReference>
<dbReference type="InterPro" id="IPR023671">
    <property type="entry name" value="ATPase_RavA"/>
</dbReference>
<dbReference type="InterPro" id="IPR022547">
    <property type="entry name" value="ATPase_RavA_C"/>
</dbReference>
<dbReference type="InterPro" id="IPR045427">
    <property type="entry name" value="MoxR"/>
</dbReference>
<dbReference type="InterPro" id="IPR027417">
    <property type="entry name" value="P-loop_NTPase"/>
</dbReference>
<dbReference type="InterPro" id="IPR041538">
    <property type="entry name" value="RavA-like_AAA_lid"/>
</dbReference>
<dbReference type="InterPro" id="IPR050513">
    <property type="entry name" value="RavA_ATPases"/>
</dbReference>
<dbReference type="InterPro" id="IPR046898">
    <property type="entry name" value="RavA_LARA_dom"/>
</dbReference>
<dbReference type="InterPro" id="IPR046932">
    <property type="entry name" value="RavA_LARA_sf"/>
</dbReference>
<dbReference type="NCBIfam" id="NF010054">
    <property type="entry name" value="PRK13531.1"/>
    <property type="match status" value="1"/>
</dbReference>
<dbReference type="PANTHER" id="PTHR32204">
    <property type="entry name" value="ATPASE RAVA"/>
    <property type="match status" value="1"/>
</dbReference>
<dbReference type="PANTHER" id="PTHR32204:SF0">
    <property type="entry name" value="ATPASE RAVA"/>
    <property type="match status" value="1"/>
</dbReference>
<dbReference type="Pfam" id="PF17868">
    <property type="entry name" value="AAA_lid_8"/>
    <property type="match status" value="1"/>
</dbReference>
<dbReference type="Pfam" id="PF12592">
    <property type="entry name" value="ATPase_RavA_C"/>
    <property type="match status" value="1"/>
</dbReference>
<dbReference type="Pfam" id="PF20030">
    <property type="entry name" value="bpMoxR"/>
    <property type="match status" value="1"/>
</dbReference>
<dbReference type="Pfam" id="PF20265">
    <property type="entry name" value="LARA_dom"/>
    <property type="match status" value="1"/>
</dbReference>
<dbReference type="SMART" id="SM00382">
    <property type="entry name" value="AAA"/>
    <property type="match status" value="1"/>
</dbReference>
<dbReference type="SUPFAM" id="SSF52540">
    <property type="entry name" value="P-loop containing nucleoside triphosphate hydrolases"/>
    <property type="match status" value="1"/>
</dbReference>
<evidence type="ECO:0000255" key="1">
    <source>
        <dbReference type="HAMAP-Rule" id="MF_01625"/>
    </source>
</evidence>
<accession>Q8ZKW2</accession>
<keyword id="KW-0067">ATP-binding</keyword>
<keyword id="KW-0143">Chaperone</keyword>
<keyword id="KW-0963">Cytoplasm</keyword>
<keyword id="KW-0378">Hydrolase</keyword>
<keyword id="KW-0547">Nucleotide-binding</keyword>
<keyword id="KW-1185">Reference proteome</keyword>
<protein>
    <recommendedName>
        <fullName evidence="1">Regulatory ATPase RavA</fullName>
        <ecNumber evidence="1">3.6.1.-</ecNumber>
    </recommendedName>
    <alternativeName>
        <fullName evidence="1">Regulatory ATPase variant A</fullName>
    </alternativeName>
</protein>
<feature type="chain" id="PRO_0000209377" description="Regulatory ATPase RavA">
    <location>
        <begin position="1"/>
        <end position="498"/>
    </location>
</feature>
<feature type="binding site" evidence="1">
    <location>
        <position position="23"/>
    </location>
    <ligand>
        <name>ADP</name>
        <dbReference type="ChEBI" id="CHEBI:456216"/>
    </ligand>
</feature>
<feature type="binding site" evidence="1">
    <location>
        <position position="49"/>
    </location>
    <ligand>
        <name>ADP</name>
        <dbReference type="ChEBI" id="CHEBI:456216"/>
    </ligand>
</feature>
<feature type="binding site" evidence="1">
    <location>
        <position position="50"/>
    </location>
    <ligand>
        <name>ADP</name>
        <dbReference type="ChEBI" id="CHEBI:456216"/>
    </ligand>
</feature>
<feature type="binding site" evidence="1">
    <location>
        <position position="51"/>
    </location>
    <ligand>
        <name>ADP</name>
        <dbReference type="ChEBI" id="CHEBI:456216"/>
    </ligand>
</feature>
<feature type="binding site" evidence="1">
    <location>
        <position position="52"/>
    </location>
    <ligand>
        <name>ADP</name>
        <dbReference type="ChEBI" id="CHEBI:456216"/>
    </ligand>
</feature>
<feature type="binding site" evidence="1">
    <location>
        <position position="53"/>
    </location>
    <ligand>
        <name>ADP</name>
        <dbReference type="ChEBI" id="CHEBI:456216"/>
    </ligand>
</feature>
<feature type="binding site" evidence="1">
    <location>
        <position position="54"/>
    </location>
    <ligand>
        <name>ADP</name>
        <dbReference type="ChEBI" id="CHEBI:456216"/>
    </ligand>
</feature>
<feature type="binding site" evidence="1">
    <location>
        <position position="196"/>
    </location>
    <ligand>
        <name>ADP</name>
        <dbReference type="ChEBI" id="CHEBI:456216"/>
    </ligand>
</feature>
<gene>
    <name evidence="1" type="primary">ravA</name>
    <name type="ordered locus">STM3879</name>
</gene>
<comment type="function">
    <text evidence="1">Component of the RavA-ViaA chaperone complex, which may act on the membrane to optimize the function of some of the respiratory chains. RavA functions as an ATPase.</text>
</comment>
<comment type="catalytic activity">
    <reaction evidence="1">
        <text>ATP + H2O = ADP + phosphate + H(+)</text>
        <dbReference type="Rhea" id="RHEA:13065"/>
        <dbReference type="ChEBI" id="CHEBI:15377"/>
        <dbReference type="ChEBI" id="CHEBI:15378"/>
        <dbReference type="ChEBI" id="CHEBI:30616"/>
        <dbReference type="ChEBI" id="CHEBI:43474"/>
        <dbReference type="ChEBI" id="CHEBI:456216"/>
    </reaction>
</comment>
<comment type="activity regulation">
    <text evidence="1">ATPase activity is stimulated by ViaA.</text>
</comment>
<comment type="subunit">
    <text evidence="1">Homohexamer. Interacts with ViaA.</text>
</comment>
<comment type="subcellular location">
    <subcellularLocation>
        <location evidence="1">Cytoplasm</location>
    </subcellularLocation>
</comment>
<comment type="similarity">
    <text evidence="1">Belongs to the RavA family.</text>
</comment>
<name>RAVA_SALTY</name>
<organism>
    <name type="scientific">Salmonella typhimurium (strain LT2 / SGSC1412 / ATCC 700720)</name>
    <dbReference type="NCBI Taxonomy" id="99287"/>
    <lineage>
        <taxon>Bacteria</taxon>
        <taxon>Pseudomonadati</taxon>
        <taxon>Pseudomonadota</taxon>
        <taxon>Gammaproteobacteria</taxon>
        <taxon>Enterobacterales</taxon>
        <taxon>Enterobacteriaceae</taxon>
        <taxon>Salmonella</taxon>
    </lineage>
</organism>
<sequence>MAHPHLLAERISRLSSALEKGLYERSHAIRLCLLAALSGESVFLLGPPGIAKSLIARRLKFAFQRARAFEYLMTRFSTPEEVFGPLSIQALKDEGRYERLTTGYLPEAEIVFLDEIWKAGPAILNTLLTAINERHFRNGAFEEKIPMRLLVAASNELPEADSSLEALYDRMLIRLWLDKVQDKANFRSMLVSQQDESDNPVPASLQVSDEEYQQWQKDIGAISLPDPVFELIFTLRQQLDNLPNAPYVSDRRWKKAIRLLQASAFFSGRDAVAPIDLILLKDCLWYDAQSLNLMQQQLEILMTGHAWQQQAMLTRLGGIVQRRLQLQQQQSDKTAFTVIKEGGMFSRRPHYTLPPEASASTLTLLLQKPLKLHDMEVIHITFDRSALELWLTKGGEIRGKLNGIGFAQTLNMEVDNAQHLVVRDISLQGTRLALPGTAEDSMPAEIKQQLETLENDWRQQHTRFSEQQHCLFIHSDWLGRIEASLQDVGEQIRQAKQC</sequence>